<comment type="subcellular location">
    <subcellularLocation>
        <location evidence="1">Secreted</location>
    </subcellularLocation>
</comment>
<comment type="tissue specificity">
    <text>Expressed by the venom duct.</text>
</comment>
<comment type="domain">
    <text evidence="1">The presence of a 'disulfide through disulfide knot' structurally defines this protein as a knottin.</text>
</comment>
<comment type="domain">
    <text>The cysteine framework is VI/VII (C-C-CC-C-C).</text>
</comment>
<proteinExistence type="evidence at transcript level"/>
<reference key="1">
    <citation type="submission" date="2010-02" db="EMBL/GenBank/DDBJ databases">
        <title>Cysteine-rich toxin gene families from Gemmula speciosa (Reeve, 1843).</title>
        <authorList>
            <person name="Uichanco J.A.V."/>
            <person name="Planta J.R.G."/>
            <person name="Santos A.D."/>
            <person name="Concepcion G.P."/>
        </authorList>
    </citation>
    <scope>NUCLEOTIDE SEQUENCE [MRNA]</scope>
    <source>
        <tissue>Venom duct</tissue>
    </source>
</reference>
<organism>
    <name type="scientific">Gemmula speciosa</name>
    <name type="common">Splendid gem-turris</name>
    <name type="synonym">Pleurotoma speciosa</name>
    <dbReference type="NCBI Taxonomy" id="439592"/>
    <lineage>
        <taxon>Eukaryota</taxon>
        <taxon>Metazoa</taxon>
        <taxon>Spiralia</taxon>
        <taxon>Lophotrochozoa</taxon>
        <taxon>Mollusca</taxon>
        <taxon>Gastropoda</taxon>
        <taxon>Caenogastropoda</taxon>
        <taxon>Neogastropoda</taxon>
        <taxon>Conoidea</taxon>
        <taxon>Turridae</taxon>
        <taxon>Gemmula</taxon>
    </lineage>
</organism>
<sequence>MRLQLILTITLLLTSFMGYRDAAVIQGKTERSAMKMRKLLQILHKNSCGCNDDDSDGDDCCFGTCLDNACWPVKKRSSAI</sequence>
<keyword id="KW-0165">Cleavage on pair of basic residues</keyword>
<keyword id="KW-1015">Disulfide bond</keyword>
<keyword id="KW-0960">Knottin</keyword>
<keyword id="KW-0528">Neurotoxin</keyword>
<keyword id="KW-0964">Secreted</keyword>
<keyword id="KW-0732">Signal</keyword>
<keyword id="KW-0800">Toxin</keyword>
<accession>D5KXG5</accession>
<dbReference type="EMBL" id="GU721046">
    <property type="protein sequence ID" value="ADE28863.1"/>
    <property type="molecule type" value="mRNA"/>
</dbReference>
<dbReference type="GO" id="GO:0005576">
    <property type="term" value="C:extracellular region"/>
    <property type="evidence" value="ECO:0007669"/>
    <property type="project" value="UniProtKB-SubCell"/>
</dbReference>
<dbReference type="GO" id="GO:0090729">
    <property type="term" value="F:toxin activity"/>
    <property type="evidence" value="ECO:0007669"/>
    <property type="project" value="UniProtKB-KW"/>
</dbReference>
<evidence type="ECO:0000250" key="1"/>
<evidence type="ECO:0000255" key="2"/>
<name>TU61_GEMSP</name>
<protein>
    <recommendedName>
        <fullName>Turripeptide VI/VII-01</fullName>
    </recommendedName>
</protein>
<feature type="signal peptide" evidence="2">
    <location>
        <begin position="1"/>
        <end position="22"/>
    </location>
</feature>
<feature type="propeptide" id="PRO_0000415058" evidence="1">
    <location>
        <begin position="23"/>
        <end position="36"/>
    </location>
</feature>
<feature type="peptide" id="PRO_0000415059" description="Turripeptide VI/VII-01">
    <location>
        <begin position="39"/>
        <end position="73"/>
    </location>
</feature>
<feature type="propeptide" id="PRO_0000415060" evidence="1">
    <location>
        <begin position="77"/>
        <end position="80"/>
    </location>
</feature>
<feature type="disulfide bond" evidence="1">
    <location>
        <begin position="48"/>
        <end position="61"/>
    </location>
</feature>
<feature type="disulfide bond" evidence="1">
    <location>
        <begin position="50"/>
        <end position="65"/>
    </location>
</feature>
<feature type="disulfide bond" evidence="1">
    <location>
        <begin position="60"/>
        <end position="70"/>
    </location>
</feature>